<sequence length="38" mass="4437">MLTLKILVYTTIIFFVSLFIFGLLSSDPSRNPNRKDFE</sequence>
<protein>
    <recommendedName>
        <fullName evidence="1">Photosystem II reaction center protein I</fullName>
        <shortName evidence="1">PSII-I</shortName>
    </recommendedName>
    <alternativeName>
        <fullName evidence="1">PSII 4.8 kDa protein</fullName>
    </alternativeName>
</protein>
<organism>
    <name type="scientific">Phaeodactylum tricornutum (strain CCAP 1055/1)</name>
    <dbReference type="NCBI Taxonomy" id="556484"/>
    <lineage>
        <taxon>Eukaryota</taxon>
        <taxon>Sar</taxon>
        <taxon>Stramenopiles</taxon>
        <taxon>Ochrophyta</taxon>
        <taxon>Bacillariophyta</taxon>
        <taxon>Bacillariophyceae</taxon>
        <taxon>Bacillariophycidae</taxon>
        <taxon>Naviculales</taxon>
        <taxon>Phaeodactylaceae</taxon>
        <taxon>Phaeodactylum</taxon>
    </lineage>
</organism>
<gene>
    <name evidence="1" type="primary">psbI</name>
</gene>
<proteinExistence type="inferred from homology"/>
<comment type="function">
    <text evidence="1">One of the components of the core complex of photosystem II (PSII), required for its stability and/or assembly. PSII is a light-driven water:plastoquinone oxidoreductase that uses light energy to abstract electrons from H(2)O, generating O(2) and a proton gradient subsequently used for ATP formation. It consists of a core antenna complex that captures photons, and an electron transfer chain that converts photonic excitation into a charge separation.</text>
</comment>
<comment type="subunit">
    <text evidence="1">PSII is composed of 1 copy each of membrane proteins PsbA, PsbB, PsbC, PsbD, PsbE, PsbF, PsbH, PsbI, PsbJ, PsbK, PsbL, PsbM, PsbT, PsbX, PsbY, PsbZ, Psb30/Ycf12, at least 3 peripheral proteins of the oxygen-evolving complex and a large number of cofactors. It forms dimeric complexes.</text>
</comment>
<comment type="subcellular location">
    <subcellularLocation>
        <location evidence="1">Plastid</location>
        <location evidence="1">Chloroplast thylakoid membrane</location>
        <topology evidence="1">Single-pass membrane protein</topology>
    </subcellularLocation>
</comment>
<comment type="similarity">
    <text evidence="1">Belongs to the PsbI family.</text>
</comment>
<accession>A0T0M2</accession>
<keyword id="KW-0150">Chloroplast</keyword>
<keyword id="KW-0472">Membrane</keyword>
<keyword id="KW-0602">Photosynthesis</keyword>
<keyword id="KW-0604">Photosystem II</keyword>
<keyword id="KW-0934">Plastid</keyword>
<keyword id="KW-0674">Reaction center</keyword>
<keyword id="KW-1185">Reference proteome</keyword>
<keyword id="KW-0793">Thylakoid</keyword>
<keyword id="KW-0812">Transmembrane</keyword>
<keyword id="KW-1133">Transmembrane helix</keyword>
<feature type="chain" id="PRO_0000275818" description="Photosystem II reaction center protein I">
    <location>
        <begin position="1"/>
        <end position="38"/>
    </location>
</feature>
<feature type="transmembrane region" description="Helical" evidence="1">
    <location>
        <begin position="6"/>
        <end position="26"/>
    </location>
</feature>
<reference key="1">
    <citation type="journal article" date="2007" name="Mol. Genet. Genomics">
        <title>Chloroplast genomes of the diatoms Phaeodactylum tricornutum and Thalassiosira pseudonana: comparison with other plastid genomes of the red lineage.</title>
        <authorList>
            <person name="Oudot-Le Secq M.-P."/>
            <person name="Grimwood J."/>
            <person name="Shapiro H."/>
            <person name="Armbrust E.V."/>
            <person name="Bowler C."/>
            <person name="Green B.R."/>
        </authorList>
    </citation>
    <scope>NUCLEOTIDE SEQUENCE [LARGE SCALE GENOMIC DNA]</scope>
    <source>
        <strain>CCAP 1055/1</strain>
    </source>
</reference>
<dbReference type="EMBL" id="EF067920">
    <property type="protein sequence ID" value="ABK20585.1"/>
    <property type="molecule type" value="Genomic_DNA"/>
</dbReference>
<dbReference type="RefSeq" id="YP_874362.1">
    <property type="nucleotide sequence ID" value="NC_008588.1"/>
</dbReference>
<dbReference type="SMR" id="A0T0M2"/>
<dbReference type="STRING" id="556484.A0T0M2"/>
<dbReference type="GeneID" id="4524639"/>
<dbReference type="InParanoid" id="A0T0M2"/>
<dbReference type="Proteomes" id="UP000000759">
    <property type="component" value="Chloroplast"/>
</dbReference>
<dbReference type="GO" id="GO:0009535">
    <property type="term" value="C:chloroplast thylakoid membrane"/>
    <property type="evidence" value="ECO:0007669"/>
    <property type="project" value="UniProtKB-SubCell"/>
</dbReference>
<dbReference type="GO" id="GO:0009539">
    <property type="term" value="C:photosystem II reaction center"/>
    <property type="evidence" value="ECO:0007669"/>
    <property type="project" value="InterPro"/>
</dbReference>
<dbReference type="GO" id="GO:0015979">
    <property type="term" value="P:photosynthesis"/>
    <property type="evidence" value="ECO:0007669"/>
    <property type="project" value="UniProtKB-UniRule"/>
</dbReference>
<dbReference type="HAMAP" id="MF_01316">
    <property type="entry name" value="PSII_PsbI"/>
    <property type="match status" value="1"/>
</dbReference>
<dbReference type="InterPro" id="IPR003686">
    <property type="entry name" value="PSII_PsbI"/>
</dbReference>
<dbReference type="InterPro" id="IPR037271">
    <property type="entry name" value="PSII_PsbI_sf"/>
</dbReference>
<dbReference type="NCBIfam" id="NF002735">
    <property type="entry name" value="PRK02655.1"/>
    <property type="match status" value="1"/>
</dbReference>
<dbReference type="PANTHER" id="PTHR35772">
    <property type="entry name" value="PHOTOSYSTEM II REACTION CENTER PROTEIN I"/>
    <property type="match status" value="1"/>
</dbReference>
<dbReference type="PANTHER" id="PTHR35772:SF1">
    <property type="entry name" value="PHOTOSYSTEM II REACTION CENTER PROTEIN I"/>
    <property type="match status" value="1"/>
</dbReference>
<dbReference type="Pfam" id="PF02532">
    <property type="entry name" value="PsbI"/>
    <property type="match status" value="1"/>
</dbReference>
<dbReference type="SUPFAM" id="SSF161041">
    <property type="entry name" value="Photosystem II reaction center protein I, PsbI"/>
    <property type="match status" value="1"/>
</dbReference>
<geneLocation type="chloroplast"/>
<name>PSBI_PHATC</name>
<evidence type="ECO:0000255" key="1">
    <source>
        <dbReference type="HAMAP-Rule" id="MF_01316"/>
    </source>
</evidence>